<sequence>MAVAAALLRRRALYSALASPSWLHDTSSCYICSISGTHSLVNHPNLRLQRGYHNSGKFDLTDLTHPHIWYPNAREKKRNVFLHVGPTNSGKTHNALKRLEASSSGVYCGPLRLLAREVAQRLNKANVPCNLITGQEREEIEGAKHSSVTVEMADMTTEYQCAVIDEIQMVGCRSRGFSFTRALLGLCSDELHVCGDPAVVPLIQRILEPTGDVVTVQYYERLSPLVPLKTTLGSFSNIKAGDCVVTFSRRSIYMLKRRIEMGGKHLCSVVYGSLPPETRTKQATMFNDQDSNLNVLVASDAIGMGLNLNISRIIFSTLEKFDGICNRELTVAEIKQIAGRAGRYGSKFPVGEVTCLNSDHLPLLHSALKSPSPIIERAGLFPTFDVLSLYSRLHGTDFFQPILERFLDKAKLSPDYFIADCEDMLKVAAIVDELPLGLYDKYLFCLSPVDIRDDISTKGLIQFAENYAKKGIVRLKEIFTPGTLQVPKSHNQLKELESIHKVLELYVWLSFRLEDSYPDRELAASQKSICSMLIEEYLERSGWQQNGRKDFLQKPKRLHQEYDASQLRKYFQEIDVRSK</sequence>
<dbReference type="EC" id="3.6.4.13" evidence="3"/>
<dbReference type="EMBL" id="GQ982584">
    <property type="protein sequence ID" value="ACX50964.1"/>
    <property type="molecule type" value="mRNA"/>
</dbReference>
<dbReference type="EMBL" id="AC087852">
    <property type="protein sequence ID" value="AAK71567.1"/>
    <property type="status" value="ALT_SEQ"/>
    <property type="molecule type" value="Genomic_DNA"/>
</dbReference>
<dbReference type="EMBL" id="DP000009">
    <property type="protein sequence ID" value="ABF98846.1"/>
    <property type="molecule type" value="Genomic_DNA"/>
</dbReference>
<dbReference type="EMBL" id="AP008209">
    <property type="protein sequence ID" value="BAF13164.1"/>
    <property type="molecule type" value="Genomic_DNA"/>
</dbReference>
<dbReference type="EMBL" id="AP014959">
    <property type="protein sequence ID" value="BAS86357.1"/>
    <property type="molecule type" value="Genomic_DNA"/>
</dbReference>
<dbReference type="EMBL" id="CM000140">
    <property type="protein sequence ID" value="EEE59922.1"/>
    <property type="status" value="ALT_SEQ"/>
    <property type="molecule type" value="Genomic_DNA"/>
</dbReference>
<dbReference type="RefSeq" id="XP_015628092.1">
    <property type="nucleotide sequence ID" value="XM_015772606.1"/>
</dbReference>
<dbReference type="SMR" id="Q10D00"/>
<dbReference type="FunCoup" id="Q10D00">
    <property type="interactions" value="341"/>
</dbReference>
<dbReference type="STRING" id="39947.Q10D00"/>
<dbReference type="GlyCosmos" id="Q10D00">
    <property type="glycosylation" value="1 site, No reported glycans"/>
</dbReference>
<dbReference type="PaxDb" id="39947-Q10D00"/>
<dbReference type="EnsemblPlants" id="Os03t0746500-01">
    <property type="protein sequence ID" value="Os03t0746500-01"/>
    <property type="gene ID" value="Os03g0746500"/>
</dbReference>
<dbReference type="Gramene" id="Os03t0746500-01">
    <property type="protein sequence ID" value="Os03t0746500-01"/>
    <property type="gene ID" value="Os03g0746500"/>
</dbReference>
<dbReference type="KEGG" id="dosa:Os03g0746500"/>
<dbReference type="eggNOG" id="KOG0953">
    <property type="taxonomic scope" value="Eukaryota"/>
</dbReference>
<dbReference type="HOGENOM" id="CLU_010647_2_0_1"/>
<dbReference type="InParanoid" id="Q10D00"/>
<dbReference type="OMA" id="QPANWYT"/>
<dbReference type="OrthoDB" id="6692397at2759"/>
<dbReference type="Proteomes" id="UP000000763">
    <property type="component" value="Chromosome 3"/>
</dbReference>
<dbReference type="Proteomes" id="UP000007752">
    <property type="component" value="Chromosome 3"/>
</dbReference>
<dbReference type="Proteomes" id="UP000059680">
    <property type="component" value="Chromosome 3"/>
</dbReference>
<dbReference type="ExpressionAtlas" id="Q10D00">
    <property type="expression patterns" value="baseline and differential"/>
</dbReference>
<dbReference type="GO" id="GO:0045025">
    <property type="term" value="C:mitochondrial degradosome"/>
    <property type="evidence" value="ECO:0000318"/>
    <property type="project" value="GO_Central"/>
</dbReference>
<dbReference type="GO" id="GO:0042645">
    <property type="term" value="C:mitochondrial nucleoid"/>
    <property type="evidence" value="ECO:0007669"/>
    <property type="project" value="UniProtKB-SubCell"/>
</dbReference>
<dbReference type="GO" id="GO:0005634">
    <property type="term" value="C:nucleus"/>
    <property type="evidence" value="ECO:0007669"/>
    <property type="project" value="UniProtKB-SubCell"/>
</dbReference>
<dbReference type="GO" id="GO:0005524">
    <property type="term" value="F:ATP binding"/>
    <property type="evidence" value="ECO:0007669"/>
    <property type="project" value="UniProtKB-KW"/>
</dbReference>
<dbReference type="GO" id="GO:0016887">
    <property type="term" value="F:ATP hydrolysis activity"/>
    <property type="evidence" value="ECO:0000314"/>
    <property type="project" value="UniProtKB"/>
</dbReference>
<dbReference type="GO" id="GO:0003678">
    <property type="term" value="F:DNA helicase activity"/>
    <property type="evidence" value="ECO:0000314"/>
    <property type="project" value="UniProtKB"/>
</dbReference>
<dbReference type="GO" id="GO:0003724">
    <property type="term" value="F:RNA helicase activity"/>
    <property type="evidence" value="ECO:0000314"/>
    <property type="project" value="UniProtKB"/>
</dbReference>
<dbReference type="GO" id="GO:0009734">
    <property type="term" value="P:auxin-activated signaling pathway"/>
    <property type="evidence" value="ECO:0007669"/>
    <property type="project" value="UniProtKB-KW"/>
</dbReference>
<dbReference type="GO" id="GO:0009736">
    <property type="term" value="P:cytokinin-activated signaling pathway"/>
    <property type="evidence" value="ECO:0007669"/>
    <property type="project" value="UniProtKB-KW"/>
</dbReference>
<dbReference type="GO" id="GO:0009740">
    <property type="term" value="P:gibberellic acid mediated signaling pathway"/>
    <property type="evidence" value="ECO:0007669"/>
    <property type="project" value="UniProtKB-KW"/>
</dbReference>
<dbReference type="GO" id="GO:0009561">
    <property type="term" value="P:megagametogenesis"/>
    <property type="evidence" value="ECO:0007669"/>
    <property type="project" value="EnsemblPlants"/>
</dbReference>
<dbReference type="GO" id="GO:0000965">
    <property type="term" value="P:mitochondrial RNA 3'-end processing"/>
    <property type="evidence" value="ECO:0000318"/>
    <property type="project" value="GO_Central"/>
</dbReference>
<dbReference type="GO" id="GO:0009555">
    <property type="term" value="P:pollen development"/>
    <property type="evidence" value="ECO:0007669"/>
    <property type="project" value="EnsemblPlants"/>
</dbReference>
<dbReference type="GO" id="GO:0010929">
    <property type="term" value="P:positive regulation of auxin mediated signaling pathway"/>
    <property type="evidence" value="ECO:0000315"/>
    <property type="project" value="UniProtKB"/>
</dbReference>
<dbReference type="GO" id="GO:0080038">
    <property type="term" value="P:positive regulation of cytokinin-activated signaling pathway"/>
    <property type="evidence" value="ECO:0000315"/>
    <property type="project" value="UniProtKB"/>
</dbReference>
<dbReference type="GO" id="GO:0009939">
    <property type="term" value="P:positive regulation of gibberellic acid mediated signaling pathway"/>
    <property type="evidence" value="ECO:0000315"/>
    <property type="project" value="UniProtKB"/>
</dbReference>
<dbReference type="GO" id="GO:1901002">
    <property type="term" value="P:positive regulation of response to salt stress"/>
    <property type="evidence" value="ECO:0000315"/>
    <property type="project" value="UniProtKB"/>
</dbReference>
<dbReference type="GO" id="GO:1902584">
    <property type="term" value="P:positive regulation of response to water deprivation"/>
    <property type="evidence" value="ECO:0000315"/>
    <property type="project" value="UniProtKB"/>
</dbReference>
<dbReference type="GO" id="GO:0009651">
    <property type="term" value="P:response to salt stress"/>
    <property type="evidence" value="ECO:0000314"/>
    <property type="project" value="UniProtKB"/>
</dbReference>
<dbReference type="CDD" id="cd17913">
    <property type="entry name" value="DEXQc_Suv3"/>
    <property type="match status" value="1"/>
</dbReference>
<dbReference type="CDD" id="cd18805">
    <property type="entry name" value="SF2_C_suv3"/>
    <property type="match status" value="1"/>
</dbReference>
<dbReference type="FunFam" id="3.40.50.300:FF:000269">
    <property type="entry name" value="ATP-dependent RNA helicase SUPV3L1, mitochondrial"/>
    <property type="match status" value="1"/>
</dbReference>
<dbReference type="FunFam" id="1.20.272.40:FF:000002">
    <property type="entry name" value="ATP-dependent RNA helicase SUV3, mitochondrial"/>
    <property type="match status" value="1"/>
</dbReference>
<dbReference type="FunFam" id="3.40.50.300:FF:001109">
    <property type="entry name" value="ATP-dependent RNA helicase suv3, mitochondrial"/>
    <property type="match status" value="1"/>
</dbReference>
<dbReference type="FunFam" id="1.20.58.1080:FF:000003">
    <property type="entry name" value="DExH-box ATP-dependent RNA helicase DExH16 mitochondrial"/>
    <property type="match status" value="1"/>
</dbReference>
<dbReference type="Gene3D" id="1.20.272.40">
    <property type="match status" value="1"/>
</dbReference>
<dbReference type="Gene3D" id="1.20.58.1080">
    <property type="match status" value="1"/>
</dbReference>
<dbReference type="Gene3D" id="3.40.50.300">
    <property type="entry name" value="P-loop containing nucleotide triphosphate hydrolases"/>
    <property type="match status" value="2"/>
</dbReference>
<dbReference type="InterPro" id="IPR055206">
    <property type="entry name" value="DEXQc_SUV3"/>
</dbReference>
<dbReference type="InterPro" id="IPR001650">
    <property type="entry name" value="Helicase_C-like"/>
</dbReference>
<dbReference type="InterPro" id="IPR027417">
    <property type="entry name" value="P-loop_NTPase"/>
</dbReference>
<dbReference type="InterPro" id="IPR050699">
    <property type="entry name" value="RNA-DNA_Helicase"/>
</dbReference>
<dbReference type="InterPro" id="IPR022192">
    <property type="entry name" value="SUV3_C"/>
</dbReference>
<dbReference type="InterPro" id="IPR041082">
    <property type="entry name" value="Suv3_C_1"/>
</dbReference>
<dbReference type="InterPro" id="IPR044774">
    <property type="entry name" value="Suv3_DEXQc"/>
</dbReference>
<dbReference type="PANTHER" id="PTHR12131">
    <property type="entry name" value="ATP-DEPENDENT RNA AND DNA HELICASE"/>
    <property type="match status" value="1"/>
</dbReference>
<dbReference type="PANTHER" id="PTHR12131:SF1">
    <property type="entry name" value="ATP-DEPENDENT RNA HELICASE SUPV3L1, MITOCHONDRIAL-RELATED"/>
    <property type="match status" value="1"/>
</dbReference>
<dbReference type="Pfam" id="PF22527">
    <property type="entry name" value="DEXQc_Suv3"/>
    <property type="match status" value="1"/>
</dbReference>
<dbReference type="Pfam" id="PF00271">
    <property type="entry name" value="Helicase_C"/>
    <property type="match status" value="1"/>
</dbReference>
<dbReference type="Pfam" id="PF12513">
    <property type="entry name" value="SUV3_C"/>
    <property type="match status" value="1"/>
</dbReference>
<dbReference type="Pfam" id="PF18147">
    <property type="entry name" value="Suv3_C_1"/>
    <property type="match status" value="1"/>
</dbReference>
<dbReference type="SMART" id="SM00490">
    <property type="entry name" value="HELICc"/>
    <property type="match status" value="1"/>
</dbReference>
<dbReference type="SUPFAM" id="SSF52540">
    <property type="entry name" value="P-loop containing nucleoside triphosphate hydrolases"/>
    <property type="match status" value="1"/>
</dbReference>
<dbReference type="PROSITE" id="PS51192">
    <property type="entry name" value="HELICASE_ATP_BIND_1"/>
    <property type="match status" value="1"/>
</dbReference>
<dbReference type="PROSITE" id="PS51194">
    <property type="entry name" value="HELICASE_CTER"/>
    <property type="match status" value="1"/>
</dbReference>
<accession>Q10D00</accession>
<accession>A0A0P0W2Y0</accession>
<accession>B9FBT0</accession>
<accession>Q94GP3</accession>
<name>SUV3M_ORYSJ</name>
<evidence type="ECO:0000250" key="1">
    <source>
        <dbReference type="UniProtKB" id="Q80YD1"/>
    </source>
</evidence>
<evidence type="ECO:0000250" key="2">
    <source>
        <dbReference type="UniProtKB" id="Q8IYB8"/>
    </source>
</evidence>
<evidence type="ECO:0000250" key="3">
    <source>
        <dbReference type="UniProtKB" id="Q9SMX1"/>
    </source>
</evidence>
<evidence type="ECO:0000255" key="4"/>
<evidence type="ECO:0000255" key="5">
    <source>
        <dbReference type="PROSITE-ProRule" id="PRU00498"/>
    </source>
</evidence>
<evidence type="ECO:0000255" key="6">
    <source>
        <dbReference type="PROSITE-ProRule" id="PRU00541"/>
    </source>
</evidence>
<evidence type="ECO:0000255" key="7">
    <source>
        <dbReference type="PROSITE-ProRule" id="PRU00542"/>
    </source>
</evidence>
<evidence type="ECO:0000269" key="8">
    <source>
    </source>
</evidence>
<evidence type="ECO:0000269" key="9">
    <source>
    </source>
</evidence>
<evidence type="ECO:0000303" key="10">
    <source>
    </source>
</evidence>
<evidence type="ECO:0000305" key="11"/>
<evidence type="ECO:0000312" key="12">
    <source>
        <dbReference type="EMBL" id="AAK71567.1"/>
    </source>
</evidence>
<evidence type="ECO:0000312" key="13">
    <source>
        <dbReference type="EMBL" id="EEE59922.1"/>
    </source>
</evidence>
<evidence type="ECO:0000312" key="14">
    <source>
        <dbReference type="Proteomes" id="UP000059680"/>
    </source>
</evidence>
<comment type="function">
    <text evidence="2 8 9">Major helicase player in mitochondrial RNA metabolism. Component of the mitochondrial degradosome (mtEXO) complex, that degrades 3' overhang double-stranded RNA with a 3'-to-5' directionality in an ATP-dependent manner (By similarity). ATPase and ATP-dependent multisubstrate helicase, able to unwind double-stranded (ds) DNA and RNA, and RNA/DNA heteroduplexes in the 5'-to-3' direction (PubMed:23808500). Plays a role in the RNA surveillance system in mitochondria; regulates the stability of mature mRNAs, the removal of aberrantly formed mRNAs and the rapid degradation of non coding processing intermediates (By similarity). Confers salinity and drought stress tolerances by maintaining both photosynthesis and antioxidant machinery, probably via an increase in plant hormones levels such as gibberellic acid (GA(3)), the cytokinin zeatin (Z) and indole-3-acetic acid (IAA) (PubMed:23808500, PubMed:25184028).</text>
</comment>
<comment type="catalytic activity">
    <reaction evidence="8">
        <text>ATP + H2O = ADP + phosphate + H(+)</text>
        <dbReference type="Rhea" id="RHEA:13065"/>
        <dbReference type="ChEBI" id="CHEBI:15377"/>
        <dbReference type="ChEBI" id="CHEBI:15378"/>
        <dbReference type="ChEBI" id="CHEBI:30616"/>
        <dbReference type="ChEBI" id="CHEBI:43474"/>
        <dbReference type="ChEBI" id="CHEBI:456216"/>
        <dbReference type="EC" id="3.6.4.13"/>
    </reaction>
</comment>
<comment type="cofactor">
    <cofactor evidence="2">
        <name>Mg(2+)</name>
        <dbReference type="ChEBI" id="CHEBI:18420"/>
    </cofactor>
    <cofactor evidence="2">
        <name>Mn(2+)</name>
        <dbReference type="ChEBI" id="CHEBI:29035"/>
    </cofactor>
</comment>
<comment type="subunit">
    <text evidence="2">Homodimer; in free form. Component of the mitochondrial degradosome (mtEXO) complex which is a heteropentamer containing 2 copies of SUPV3L1 and 3 copies of PNPT1.</text>
</comment>
<comment type="subcellular location">
    <subcellularLocation>
        <location evidence="2">Nucleus</location>
    </subcellularLocation>
    <subcellularLocation>
        <location evidence="3">Mitochondrion matrix</location>
    </subcellularLocation>
    <subcellularLocation>
        <location evidence="2">Mitochondrion matrix</location>
        <location evidence="2">Mitochondrion nucleoid</location>
    </subcellularLocation>
</comment>
<comment type="induction">
    <text evidence="8">Induced in seedlings in response to high levels of salt.</text>
</comment>
<comment type="similarity">
    <text evidence="11">Belongs to the helicase family.</text>
</comment>
<comment type="sequence caution" evidence="11">
    <conflict type="erroneous gene model prediction">
        <sequence resource="EMBL-CDS" id="AAK71567"/>
    </conflict>
</comment>
<comment type="sequence caution" evidence="11">
    <conflict type="erroneous gene model prediction">
        <sequence resource="EMBL-CDS" id="EEE59922"/>
    </conflict>
</comment>
<reference key="1">
    <citation type="journal article" date="2013" name="Plant J.">
        <title>OsSUV3 dual helicase functions in salinity stress tolerance by maintaining photosynthesis and antioxidant machinery in rice (Oryza sativa L. cv. IR64).</title>
        <authorList>
            <person name="Tuteja N."/>
            <person name="Sahoo R.K."/>
            <person name="Garg B."/>
            <person name="Tuteja R."/>
        </authorList>
    </citation>
    <scope>NUCLEOTIDE SEQUENCE [MRNA]</scope>
    <scope>FUNCTION</scope>
    <scope>CATALYTIC ACTIVITY</scope>
    <scope>INDUCTION BY SALT</scope>
    <source>
        <strain>cv. Nipponbare</strain>
    </source>
</reference>
<reference key="2">
    <citation type="journal article" date="2005" name="Genome Res.">
        <title>Sequence, annotation, and analysis of synteny between rice chromosome 3 and diverged grass species.</title>
        <authorList>
            <consortium name="The rice chromosome 3 sequencing consortium"/>
            <person name="Buell C.R."/>
            <person name="Yuan Q."/>
            <person name="Ouyang S."/>
            <person name="Liu J."/>
            <person name="Zhu W."/>
            <person name="Wang A."/>
            <person name="Maiti R."/>
            <person name="Haas B."/>
            <person name="Wortman J."/>
            <person name="Pertea M."/>
            <person name="Jones K.M."/>
            <person name="Kim M."/>
            <person name="Overton L."/>
            <person name="Tsitrin T."/>
            <person name="Fadrosh D."/>
            <person name="Bera J."/>
            <person name="Weaver B."/>
            <person name="Jin S."/>
            <person name="Johri S."/>
            <person name="Reardon M."/>
            <person name="Webb K."/>
            <person name="Hill J."/>
            <person name="Moffat K."/>
            <person name="Tallon L."/>
            <person name="Van Aken S."/>
            <person name="Lewis M."/>
            <person name="Utterback T."/>
            <person name="Feldblyum T."/>
            <person name="Zismann V."/>
            <person name="Iobst S."/>
            <person name="Hsiao J."/>
            <person name="de Vazeille A.R."/>
            <person name="Salzberg S.L."/>
            <person name="White O."/>
            <person name="Fraser C.M."/>
            <person name="Yu Y."/>
            <person name="Kim H."/>
            <person name="Rambo T."/>
            <person name="Currie J."/>
            <person name="Collura K."/>
            <person name="Kernodle-Thompson S."/>
            <person name="Wei F."/>
            <person name="Kudrna K."/>
            <person name="Ammiraju J.S.S."/>
            <person name="Luo M."/>
            <person name="Goicoechea J.L."/>
            <person name="Wing R.A."/>
            <person name="Henry D."/>
            <person name="Oates R."/>
            <person name="Palmer M."/>
            <person name="Pries G."/>
            <person name="Saski C."/>
            <person name="Simmons J."/>
            <person name="Soderlund C."/>
            <person name="Nelson W."/>
            <person name="de la Bastide M."/>
            <person name="Spiegel L."/>
            <person name="Nascimento L."/>
            <person name="Huang E."/>
            <person name="Preston R."/>
            <person name="Zutavern T."/>
            <person name="Palmer L."/>
            <person name="O'Shaughnessy A."/>
            <person name="Dike S."/>
            <person name="McCombie W.R."/>
            <person name="Minx P."/>
            <person name="Cordum H."/>
            <person name="Wilson R."/>
            <person name="Jin W."/>
            <person name="Lee H.R."/>
            <person name="Jiang J."/>
            <person name="Jackson S."/>
        </authorList>
    </citation>
    <scope>NUCLEOTIDE SEQUENCE [LARGE SCALE GENOMIC DNA]</scope>
    <source>
        <strain>cv. Nipponbare</strain>
    </source>
</reference>
<reference key="3">
    <citation type="journal article" date="2005" name="Nature">
        <title>The map-based sequence of the rice genome.</title>
        <authorList>
            <consortium name="International rice genome sequencing project (IRGSP)"/>
        </authorList>
    </citation>
    <scope>NUCLEOTIDE SEQUENCE [LARGE SCALE GENOMIC DNA]</scope>
    <source>
        <strain>cv. Nipponbare</strain>
    </source>
</reference>
<reference key="4">
    <citation type="journal article" date="2008" name="Nucleic Acids Res.">
        <title>The rice annotation project database (RAP-DB): 2008 update.</title>
        <authorList>
            <consortium name="The rice annotation project (RAP)"/>
        </authorList>
    </citation>
    <scope>GENOME REANNOTATION</scope>
    <source>
        <strain>cv. Nipponbare</strain>
    </source>
</reference>
<reference key="5">
    <citation type="journal article" date="2013" name="Rice">
        <title>Improvement of the Oryza sativa Nipponbare reference genome using next generation sequence and optical map data.</title>
        <authorList>
            <person name="Kawahara Y."/>
            <person name="de la Bastide M."/>
            <person name="Hamilton J.P."/>
            <person name="Kanamori H."/>
            <person name="McCombie W.R."/>
            <person name="Ouyang S."/>
            <person name="Schwartz D.C."/>
            <person name="Tanaka T."/>
            <person name="Wu J."/>
            <person name="Zhou S."/>
            <person name="Childs K.L."/>
            <person name="Davidson R.M."/>
            <person name="Lin H."/>
            <person name="Quesada-Ocampo L."/>
            <person name="Vaillancourt B."/>
            <person name="Sakai H."/>
            <person name="Lee S.S."/>
            <person name="Kim J."/>
            <person name="Numa H."/>
            <person name="Itoh T."/>
            <person name="Buell C.R."/>
            <person name="Matsumoto T."/>
        </authorList>
    </citation>
    <scope>GENOME REANNOTATION</scope>
    <source>
        <strain>cv. Nipponbare</strain>
    </source>
</reference>
<reference key="6">
    <citation type="journal article" date="2005" name="PLoS Biol.">
        <title>The genomes of Oryza sativa: a history of duplications.</title>
        <authorList>
            <person name="Yu J."/>
            <person name="Wang J."/>
            <person name="Lin W."/>
            <person name="Li S."/>
            <person name="Li H."/>
            <person name="Zhou J."/>
            <person name="Ni P."/>
            <person name="Dong W."/>
            <person name="Hu S."/>
            <person name="Zeng C."/>
            <person name="Zhang J."/>
            <person name="Zhang Y."/>
            <person name="Li R."/>
            <person name="Xu Z."/>
            <person name="Li S."/>
            <person name="Li X."/>
            <person name="Zheng H."/>
            <person name="Cong L."/>
            <person name="Lin L."/>
            <person name="Yin J."/>
            <person name="Geng J."/>
            <person name="Li G."/>
            <person name="Shi J."/>
            <person name="Liu J."/>
            <person name="Lv H."/>
            <person name="Li J."/>
            <person name="Wang J."/>
            <person name="Deng Y."/>
            <person name="Ran L."/>
            <person name="Shi X."/>
            <person name="Wang X."/>
            <person name="Wu Q."/>
            <person name="Li C."/>
            <person name="Ren X."/>
            <person name="Wang J."/>
            <person name="Wang X."/>
            <person name="Li D."/>
            <person name="Liu D."/>
            <person name="Zhang X."/>
            <person name="Ji Z."/>
            <person name="Zhao W."/>
            <person name="Sun Y."/>
            <person name="Zhang Z."/>
            <person name="Bao J."/>
            <person name="Han Y."/>
            <person name="Dong L."/>
            <person name="Ji J."/>
            <person name="Chen P."/>
            <person name="Wu S."/>
            <person name="Liu J."/>
            <person name="Xiao Y."/>
            <person name="Bu D."/>
            <person name="Tan J."/>
            <person name="Yang L."/>
            <person name="Ye C."/>
            <person name="Zhang J."/>
            <person name="Xu J."/>
            <person name="Zhou Y."/>
            <person name="Yu Y."/>
            <person name="Zhang B."/>
            <person name="Zhuang S."/>
            <person name="Wei H."/>
            <person name="Liu B."/>
            <person name="Lei M."/>
            <person name="Yu H."/>
            <person name="Li Y."/>
            <person name="Xu H."/>
            <person name="Wei S."/>
            <person name="He X."/>
            <person name="Fang L."/>
            <person name="Zhang Z."/>
            <person name="Zhang Y."/>
            <person name="Huang X."/>
            <person name="Su Z."/>
            <person name="Tong W."/>
            <person name="Li J."/>
            <person name="Tong Z."/>
            <person name="Li S."/>
            <person name="Ye J."/>
            <person name="Wang L."/>
            <person name="Fang L."/>
            <person name="Lei T."/>
            <person name="Chen C.-S."/>
            <person name="Chen H.-C."/>
            <person name="Xu Z."/>
            <person name="Li H."/>
            <person name="Huang H."/>
            <person name="Zhang F."/>
            <person name="Xu H."/>
            <person name="Li N."/>
            <person name="Zhao C."/>
            <person name="Li S."/>
            <person name="Dong L."/>
            <person name="Huang Y."/>
            <person name="Li L."/>
            <person name="Xi Y."/>
            <person name="Qi Q."/>
            <person name="Li W."/>
            <person name="Zhang B."/>
            <person name="Hu W."/>
            <person name="Zhang Y."/>
            <person name="Tian X."/>
            <person name="Jiao Y."/>
            <person name="Liang X."/>
            <person name="Jin J."/>
            <person name="Gao L."/>
            <person name="Zheng W."/>
            <person name="Hao B."/>
            <person name="Liu S.-M."/>
            <person name="Wang W."/>
            <person name="Yuan L."/>
            <person name="Cao M."/>
            <person name="McDermott J."/>
            <person name="Samudrala R."/>
            <person name="Wang J."/>
            <person name="Wong G.K.-S."/>
            <person name="Yang H."/>
        </authorList>
    </citation>
    <scope>NUCLEOTIDE SEQUENCE [LARGE SCALE GENOMIC DNA]</scope>
    <source>
        <strain>cv. Nipponbare</strain>
    </source>
</reference>
<reference key="7">
    <citation type="journal article" date="2014" name="Rice">
        <title>OsSUV3 transgenic rice maintains higher endogenous levels of plant hormones that mitigates adverse effects of salinity and sustains crop productivity.</title>
        <authorList>
            <person name="Sahoo R.K."/>
            <person name="Ansari M.W."/>
            <person name="Tuteja R."/>
            <person name="Tuteja N."/>
        </authorList>
    </citation>
    <scope>FUNCTION</scope>
</reference>
<proteinExistence type="evidence at protein level"/>
<feature type="transit peptide" description="Mitochondrion" evidence="4">
    <location>
        <begin position="1"/>
        <end position="59"/>
    </location>
</feature>
<feature type="chain" id="PRO_0000431534" description="ATP-dependent RNA helicase SUV3, mitochondrial" evidence="4">
    <location>
        <begin position="60"/>
        <end position="579"/>
    </location>
</feature>
<feature type="domain" description="Helicase ATP-binding" evidence="1">
    <location>
        <begin position="72"/>
        <end position="213"/>
    </location>
</feature>
<feature type="domain" description="Helicase C-terminal" evidence="7">
    <location>
        <begin position="214"/>
        <end position="388"/>
    </location>
</feature>
<feature type="binding site" evidence="6">
    <location>
        <begin position="85"/>
        <end position="92"/>
    </location>
    <ligand>
        <name>ATP</name>
        <dbReference type="ChEBI" id="CHEBI:30616"/>
    </ligand>
</feature>
<feature type="glycosylation site" description="N-linked (GlcNAc...) asparagine" evidence="5">
    <location>
        <position position="309"/>
    </location>
</feature>
<feature type="sequence conflict" description="In Ref. 6; EEE59922." evidence="11" ref="6">
    <original>A</original>
    <variation>S</variation>
    <location>
        <position position="5"/>
    </location>
</feature>
<keyword id="KW-0067">ATP-binding</keyword>
<keyword id="KW-0927">Auxin signaling pathway</keyword>
<keyword id="KW-0932">Cytokinin signaling pathway</keyword>
<keyword id="KW-0939">Gibberellin signaling pathway</keyword>
<keyword id="KW-0325">Glycoprotein</keyword>
<keyword id="KW-0347">Helicase</keyword>
<keyword id="KW-0378">Hydrolase</keyword>
<keyword id="KW-0496">Mitochondrion</keyword>
<keyword id="KW-1135">Mitochondrion nucleoid</keyword>
<keyword id="KW-0547">Nucleotide-binding</keyword>
<keyword id="KW-0539">Nucleus</keyword>
<keyword id="KW-1185">Reference proteome</keyword>
<keyword id="KW-0346">Stress response</keyword>
<keyword id="KW-0809">Transit peptide</keyword>
<organism evidence="14">
    <name type="scientific">Oryza sativa subsp. japonica</name>
    <name type="common">Rice</name>
    <dbReference type="NCBI Taxonomy" id="39947"/>
    <lineage>
        <taxon>Eukaryota</taxon>
        <taxon>Viridiplantae</taxon>
        <taxon>Streptophyta</taxon>
        <taxon>Embryophyta</taxon>
        <taxon>Tracheophyta</taxon>
        <taxon>Spermatophyta</taxon>
        <taxon>Magnoliopsida</taxon>
        <taxon>Liliopsida</taxon>
        <taxon>Poales</taxon>
        <taxon>Poaceae</taxon>
        <taxon>BOP clade</taxon>
        <taxon>Oryzoideae</taxon>
        <taxon>Oryzeae</taxon>
        <taxon>Oryzinae</taxon>
        <taxon>Oryza</taxon>
        <taxon>Oryza sativa</taxon>
    </lineage>
</organism>
<protein>
    <recommendedName>
        <fullName evidence="10">ATP-dependent RNA helicase SUV3, mitochondrial</fullName>
        <shortName evidence="10">OsSUV3</shortName>
        <ecNumber evidence="3">3.6.4.13</ecNumber>
    </recommendedName>
    <alternativeName>
        <fullName evidence="10">Protein SUPPRESSOR OF VAR 3</fullName>
    </alternativeName>
</protein>
<gene>
    <name evidence="10" type="primary">SUV3</name>
    <name evidence="11" type="ordered locus">LOC_Os03g53500</name>
    <name evidence="11" type="ordered locus">Os03g0746500</name>
    <name evidence="12" type="ORF">OJ1124_H03.19</name>
    <name evidence="13" type="ORF">OsJ_12550</name>
</gene>